<keyword id="KW-0004">4Fe-4S</keyword>
<keyword id="KW-0408">Iron</keyword>
<keyword id="KW-0411">Iron-sulfur</keyword>
<keyword id="KW-0479">Metal-binding</keyword>
<keyword id="KW-1185">Reference proteome</keyword>
<keyword id="KW-0949">S-adenosyl-L-methionine</keyword>
<keyword id="KW-0808">Transferase</keyword>
<reference key="1">
    <citation type="journal article" date="1996" name="Science">
        <title>Complete genome sequence of the methanogenic archaeon, Methanococcus jannaschii.</title>
        <authorList>
            <person name="Bult C.J."/>
            <person name="White O."/>
            <person name="Olsen G.J."/>
            <person name="Zhou L."/>
            <person name="Fleischmann R.D."/>
            <person name="Sutton G.G."/>
            <person name="Blake J.A."/>
            <person name="FitzGerald L.M."/>
            <person name="Clayton R.A."/>
            <person name="Gocayne J.D."/>
            <person name="Kerlavage A.R."/>
            <person name="Dougherty B.A."/>
            <person name="Tomb J.-F."/>
            <person name="Adams M.D."/>
            <person name="Reich C.I."/>
            <person name="Overbeek R."/>
            <person name="Kirkness E.F."/>
            <person name="Weinstock K.G."/>
            <person name="Merrick J.M."/>
            <person name="Glodek A."/>
            <person name="Scott J.L."/>
            <person name="Geoghagen N.S.M."/>
            <person name="Weidman J.F."/>
            <person name="Fuhrmann J.L."/>
            <person name="Nguyen D."/>
            <person name="Utterback T.R."/>
            <person name="Kelley J.M."/>
            <person name="Peterson J.D."/>
            <person name="Sadow P.W."/>
            <person name="Hanna M.C."/>
            <person name="Cotton M.D."/>
            <person name="Roberts K.M."/>
            <person name="Hurst M.A."/>
            <person name="Kaine B.P."/>
            <person name="Borodovsky M."/>
            <person name="Klenk H.-P."/>
            <person name="Fraser C.M."/>
            <person name="Smith H.O."/>
            <person name="Woese C.R."/>
            <person name="Venter J.C."/>
        </authorList>
    </citation>
    <scope>NUCLEOTIDE SEQUENCE [LARGE SCALE GENOMIC DNA]</scope>
    <source>
        <strain>ATCC 43067 / DSM 2661 / JAL-1 / JCM 10045 / NBRC 100440</strain>
    </source>
</reference>
<organism>
    <name type="scientific">Methanocaldococcus jannaschii (strain ATCC 43067 / DSM 2661 / JAL-1 / JCM 10045 / NBRC 100440)</name>
    <name type="common">Methanococcus jannaschii</name>
    <dbReference type="NCBI Taxonomy" id="243232"/>
    <lineage>
        <taxon>Archaea</taxon>
        <taxon>Methanobacteriati</taxon>
        <taxon>Methanobacteriota</taxon>
        <taxon>Methanomada group</taxon>
        <taxon>Methanococci</taxon>
        <taxon>Methanococcales</taxon>
        <taxon>Methanocaldococcaceae</taxon>
        <taxon>Methanocaldococcus</taxon>
    </lineage>
</organism>
<feature type="chain" id="PRO_0000106891" description="2-(3-amino-3-carboxypropyl)histidine synthase">
    <location>
        <begin position="1"/>
        <end position="340"/>
    </location>
</feature>
<feature type="binding site" evidence="1">
    <location>
        <position position="83"/>
    </location>
    <ligand>
        <name>[4Fe-4S] cluster</name>
        <dbReference type="ChEBI" id="CHEBI:49883"/>
    </ligand>
</feature>
<feature type="binding site" evidence="1">
    <location>
        <position position="173"/>
    </location>
    <ligand>
        <name>[4Fe-4S] cluster</name>
        <dbReference type="ChEBI" id="CHEBI:49883"/>
    </ligand>
</feature>
<feature type="binding site" evidence="1">
    <location>
        <position position="299"/>
    </location>
    <ligand>
        <name>[4Fe-4S] cluster</name>
        <dbReference type="ChEBI" id="CHEBI:49883"/>
    </ligand>
</feature>
<sequence>MLFKTIFYQKLQKKVTTLFNLETERVIREIENLNKNNPKVIFQAPEGLKLKVEKEIEKIKQYFKQKNINIEIYLWGNTCFGACDLIDNHVKNLNVDLIIHYGHEKLSYANPEIKTLFIPAYHIFNKDEEEKILNDIKNFIEKHKSGGKKVAIATTIQYKKLLKDFNPSIILGCRGEVKEGDVILFVGTGRFHPLMIAYKYQKEVFIYNPLSKCFDKISEEEINKFIKKRILAISKLLLNKPKKVGVVLSTKKGQCRKRVFDEIIKLLEENDVNYLPILVDNISPDILFYDVDCYIIVACPRIVLDDYILYKKPIYTPEEFKLFLKNSFKYKFDEIKEDDF</sequence>
<accession>Q57907</accession>
<proteinExistence type="inferred from homology"/>
<protein>
    <recommendedName>
        <fullName>2-(3-amino-3-carboxypropyl)histidine synthase</fullName>
        <ecNumber evidence="2">2.5.1.108</ecNumber>
    </recommendedName>
    <alternativeName>
        <fullName>Diphthamide biosynthesis protein Dph2</fullName>
    </alternativeName>
    <alternativeName>
        <fullName>S-adenosyl-L-methionine:L-histidine 3-amino-3-carboxypropyltransferase</fullName>
    </alternativeName>
</protein>
<gene>
    <name type="primary">dph2</name>
    <name type="ordered locus">MJ0483</name>
</gene>
<comment type="function">
    <text evidence="2">Catalyzes the first step of diphthamide biosynthesis, i.e. the transfer of the 3-amino-3-carboxypropyl group from S-adenosyl-L-methionine (SAM) to the C2 position of the imidazole ring of the target histidine residue in translation elongation factor 2 (EF-2).</text>
</comment>
<comment type="catalytic activity">
    <reaction evidence="2">
        <text>L-histidyl-[translation elongation factor 2] + S-adenosyl-L-methionine = 2-[(3S)-amino-3-carboxypropyl]-L-histidyl-[translation elongation factor 2] + S-methyl-5'-thioadenosine + H(+)</text>
        <dbReference type="Rhea" id="RHEA:36783"/>
        <dbReference type="Rhea" id="RHEA-COMP:9748"/>
        <dbReference type="Rhea" id="RHEA-COMP:9749"/>
        <dbReference type="ChEBI" id="CHEBI:15378"/>
        <dbReference type="ChEBI" id="CHEBI:17509"/>
        <dbReference type="ChEBI" id="CHEBI:29979"/>
        <dbReference type="ChEBI" id="CHEBI:59789"/>
        <dbReference type="ChEBI" id="CHEBI:73995"/>
        <dbReference type="EC" id="2.5.1.108"/>
    </reaction>
</comment>
<comment type="cofactor">
    <cofactor evidence="2">
        <name>[4Fe-4S] cluster</name>
        <dbReference type="ChEBI" id="CHEBI:49883"/>
    </cofactor>
    <text evidence="2">Binds 1 [4Fe-4S] cluster per subunit. The cluster is coordinated with 3 cysteines and an exchangeable S-adenosyl-L-methionine.</text>
</comment>
<comment type="pathway">
    <text>Protein modification; peptidyl-diphthamide biosynthesis.</text>
</comment>
<comment type="subunit">
    <text evidence="2">Homodimer.</text>
</comment>
<comment type="miscellaneous">
    <text evidence="2">Unlike the enzymes in the radical SAM superfamily, Dph2 does not form the canonical 5'-deoxyadenosyl radical. Instead, it breaks the C(gamma)-S bond of SAM and generates a 3-amino-3-carboxypropyl radical intermediate.</text>
</comment>
<comment type="similarity">
    <text evidence="3">Belongs to the DPH1/DPH2 family.</text>
</comment>
<evidence type="ECO:0000250" key="1"/>
<evidence type="ECO:0000250" key="2">
    <source>
        <dbReference type="UniProtKB" id="O58832"/>
    </source>
</evidence>
<evidence type="ECO:0000305" key="3"/>
<name>DPH2_METJA</name>
<dbReference type="EC" id="2.5.1.108" evidence="2"/>
<dbReference type="EMBL" id="L77117">
    <property type="protein sequence ID" value="AAB98474.1"/>
    <property type="molecule type" value="Genomic_DNA"/>
</dbReference>
<dbReference type="PIR" id="C64360">
    <property type="entry name" value="C64360"/>
</dbReference>
<dbReference type="SMR" id="Q57907"/>
<dbReference type="FunCoup" id="Q57907">
    <property type="interactions" value="135"/>
</dbReference>
<dbReference type="STRING" id="243232.MJ_0483"/>
<dbReference type="PaxDb" id="243232-MJ_0483"/>
<dbReference type="EnsemblBacteria" id="AAB98474">
    <property type="protein sequence ID" value="AAB98474"/>
    <property type="gene ID" value="MJ_0483"/>
</dbReference>
<dbReference type="KEGG" id="mja:MJ_0483"/>
<dbReference type="eggNOG" id="arCOG04112">
    <property type="taxonomic scope" value="Archaea"/>
</dbReference>
<dbReference type="HOGENOM" id="CLU_037146_0_0_2"/>
<dbReference type="InParanoid" id="Q57907"/>
<dbReference type="PhylomeDB" id="Q57907"/>
<dbReference type="UniPathway" id="UPA00559"/>
<dbReference type="Proteomes" id="UP000000805">
    <property type="component" value="Chromosome"/>
</dbReference>
<dbReference type="GO" id="GO:0090560">
    <property type="term" value="F:2-(3-amino-3-carboxypropyl)histidine synthase activity"/>
    <property type="evidence" value="ECO:0007669"/>
    <property type="project" value="UniProtKB-EC"/>
</dbReference>
<dbReference type="GO" id="GO:0051539">
    <property type="term" value="F:4 iron, 4 sulfur cluster binding"/>
    <property type="evidence" value="ECO:0007669"/>
    <property type="project" value="UniProtKB-KW"/>
</dbReference>
<dbReference type="GO" id="GO:0046872">
    <property type="term" value="F:metal ion binding"/>
    <property type="evidence" value="ECO:0007669"/>
    <property type="project" value="UniProtKB-KW"/>
</dbReference>
<dbReference type="GO" id="GO:0017183">
    <property type="term" value="P:protein histidyl modification to diphthamide"/>
    <property type="evidence" value="ECO:0000318"/>
    <property type="project" value="GO_Central"/>
</dbReference>
<dbReference type="Gene3D" id="3.40.50.11840">
    <property type="entry name" value="Diphthamide synthesis DPH1/DPH2 domain 1"/>
    <property type="match status" value="1"/>
</dbReference>
<dbReference type="Gene3D" id="3.40.50.11850">
    <property type="entry name" value="Diphthamide synthesis DPH1/DPH2 domain 2"/>
    <property type="match status" value="1"/>
</dbReference>
<dbReference type="Gene3D" id="3.40.50.11860">
    <property type="entry name" value="Diphthamide synthesis DPH1/DPH2 domain 3"/>
    <property type="match status" value="1"/>
</dbReference>
<dbReference type="InterPro" id="IPR016435">
    <property type="entry name" value="DPH1/DPH2"/>
</dbReference>
<dbReference type="InterPro" id="IPR042263">
    <property type="entry name" value="DPH1/DPH2_1"/>
</dbReference>
<dbReference type="InterPro" id="IPR042264">
    <property type="entry name" value="DPH1/DPH2_2"/>
</dbReference>
<dbReference type="InterPro" id="IPR042265">
    <property type="entry name" value="DPH1/DPH2_3"/>
</dbReference>
<dbReference type="InterPro" id="IPR035435">
    <property type="entry name" value="DPH1/DPH2_euk_archaea"/>
</dbReference>
<dbReference type="InterPro" id="IPR022428">
    <property type="entry name" value="Dph2_arc"/>
</dbReference>
<dbReference type="NCBIfam" id="TIGR03682">
    <property type="entry name" value="arCOG04112"/>
    <property type="match status" value="1"/>
</dbReference>
<dbReference type="NCBIfam" id="TIGR00322">
    <property type="entry name" value="diphth2_R"/>
    <property type="match status" value="1"/>
</dbReference>
<dbReference type="PANTHER" id="PTHR10762:SF1">
    <property type="entry name" value="2-(3-AMINO-3-CARBOXYPROPYL)HISTIDINE SYNTHASE SUBUNIT 1"/>
    <property type="match status" value="1"/>
</dbReference>
<dbReference type="PANTHER" id="PTHR10762">
    <property type="entry name" value="DIPHTHAMIDE BIOSYNTHESIS PROTEIN"/>
    <property type="match status" value="1"/>
</dbReference>
<dbReference type="Pfam" id="PF01866">
    <property type="entry name" value="Diphthamide_syn"/>
    <property type="match status" value="2"/>
</dbReference>
<dbReference type="PIRSF" id="PIRSF004967">
    <property type="entry name" value="DPH1"/>
    <property type="match status" value="1"/>
</dbReference>
<dbReference type="SFLD" id="SFLDS00032">
    <property type="entry name" value="Radical_SAM_3-amino-3-carboxyp"/>
    <property type="match status" value="1"/>
</dbReference>